<feature type="chain" id="PRO_1000134110" description="ATP synthase gamma chain">
    <location>
        <begin position="1"/>
        <end position="286"/>
    </location>
</feature>
<proteinExistence type="inferred from homology"/>
<name>ATPG_BACC4</name>
<reference key="1">
    <citation type="submission" date="2008-10" db="EMBL/GenBank/DDBJ databases">
        <title>Genome sequence of Bacillus cereus B4264.</title>
        <authorList>
            <person name="Dodson R.J."/>
            <person name="Durkin A.S."/>
            <person name="Rosovitz M.J."/>
            <person name="Rasko D.A."/>
            <person name="Hoffmaster A."/>
            <person name="Ravel J."/>
            <person name="Sutton G."/>
        </authorList>
    </citation>
    <scope>NUCLEOTIDE SEQUENCE [LARGE SCALE GENOMIC DNA]</scope>
    <source>
        <strain>B4264</strain>
    </source>
</reference>
<keyword id="KW-0066">ATP synthesis</keyword>
<keyword id="KW-1003">Cell membrane</keyword>
<keyword id="KW-0139">CF(1)</keyword>
<keyword id="KW-0375">Hydrogen ion transport</keyword>
<keyword id="KW-0406">Ion transport</keyword>
<keyword id="KW-0472">Membrane</keyword>
<keyword id="KW-0813">Transport</keyword>
<evidence type="ECO:0000255" key="1">
    <source>
        <dbReference type="HAMAP-Rule" id="MF_00815"/>
    </source>
</evidence>
<dbReference type="EMBL" id="CP001176">
    <property type="protein sequence ID" value="ACK61125.1"/>
    <property type="molecule type" value="Genomic_DNA"/>
</dbReference>
<dbReference type="RefSeq" id="WP_000157696.1">
    <property type="nucleotide sequence ID" value="NZ_VEHB01000004.1"/>
</dbReference>
<dbReference type="SMR" id="B7HFK2"/>
<dbReference type="GeneID" id="93005817"/>
<dbReference type="KEGG" id="bcb:BCB4264_A5427"/>
<dbReference type="HOGENOM" id="CLU_050669_0_1_9"/>
<dbReference type="Proteomes" id="UP000007096">
    <property type="component" value="Chromosome"/>
</dbReference>
<dbReference type="GO" id="GO:0005886">
    <property type="term" value="C:plasma membrane"/>
    <property type="evidence" value="ECO:0007669"/>
    <property type="project" value="UniProtKB-SubCell"/>
</dbReference>
<dbReference type="GO" id="GO:0045259">
    <property type="term" value="C:proton-transporting ATP synthase complex"/>
    <property type="evidence" value="ECO:0007669"/>
    <property type="project" value="UniProtKB-KW"/>
</dbReference>
<dbReference type="GO" id="GO:0005524">
    <property type="term" value="F:ATP binding"/>
    <property type="evidence" value="ECO:0007669"/>
    <property type="project" value="UniProtKB-UniRule"/>
</dbReference>
<dbReference type="GO" id="GO:0046933">
    <property type="term" value="F:proton-transporting ATP synthase activity, rotational mechanism"/>
    <property type="evidence" value="ECO:0007669"/>
    <property type="project" value="UniProtKB-UniRule"/>
</dbReference>
<dbReference type="GO" id="GO:0042777">
    <property type="term" value="P:proton motive force-driven plasma membrane ATP synthesis"/>
    <property type="evidence" value="ECO:0007669"/>
    <property type="project" value="UniProtKB-UniRule"/>
</dbReference>
<dbReference type="CDD" id="cd12151">
    <property type="entry name" value="F1-ATPase_gamma"/>
    <property type="match status" value="1"/>
</dbReference>
<dbReference type="FunFam" id="3.40.1380.10:FF:000002">
    <property type="entry name" value="ATP synthase gamma chain"/>
    <property type="match status" value="1"/>
</dbReference>
<dbReference type="Gene3D" id="3.40.1380.10">
    <property type="match status" value="1"/>
</dbReference>
<dbReference type="Gene3D" id="1.10.287.80">
    <property type="entry name" value="ATP synthase, gamma subunit, helix hairpin domain"/>
    <property type="match status" value="1"/>
</dbReference>
<dbReference type="HAMAP" id="MF_00815">
    <property type="entry name" value="ATP_synth_gamma_bact"/>
    <property type="match status" value="1"/>
</dbReference>
<dbReference type="InterPro" id="IPR035968">
    <property type="entry name" value="ATP_synth_F1_ATPase_gsu"/>
</dbReference>
<dbReference type="InterPro" id="IPR000131">
    <property type="entry name" value="ATP_synth_F1_gsu"/>
</dbReference>
<dbReference type="InterPro" id="IPR023632">
    <property type="entry name" value="ATP_synth_F1_gsu_CS"/>
</dbReference>
<dbReference type="NCBIfam" id="TIGR01146">
    <property type="entry name" value="ATPsyn_F1gamma"/>
    <property type="match status" value="1"/>
</dbReference>
<dbReference type="PANTHER" id="PTHR11693">
    <property type="entry name" value="ATP SYNTHASE GAMMA CHAIN"/>
    <property type="match status" value="1"/>
</dbReference>
<dbReference type="PANTHER" id="PTHR11693:SF22">
    <property type="entry name" value="ATP SYNTHASE SUBUNIT GAMMA, MITOCHONDRIAL"/>
    <property type="match status" value="1"/>
</dbReference>
<dbReference type="Pfam" id="PF00231">
    <property type="entry name" value="ATP-synt"/>
    <property type="match status" value="1"/>
</dbReference>
<dbReference type="PRINTS" id="PR00126">
    <property type="entry name" value="ATPASEGAMMA"/>
</dbReference>
<dbReference type="SUPFAM" id="SSF52943">
    <property type="entry name" value="ATP synthase (F1-ATPase), gamma subunit"/>
    <property type="match status" value="1"/>
</dbReference>
<dbReference type="PROSITE" id="PS00153">
    <property type="entry name" value="ATPASE_GAMMA"/>
    <property type="match status" value="1"/>
</dbReference>
<protein>
    <recommendedName>
        <fullName evidence="1">ATP synthase gamma chain</fullName>
    </recommendedName>
    <alternativeName>
        <fullName evidence="1">ATP synthase F1 sector gamma subunit</fullName>
    </alternativeName>
    <alternativeName>
        <fullName evidence="1">F-ATPase gamma subunit</fullName>
    </alternativeName>
</protein>
<gene>
    <name evidence="1" type="primary">atpG</name>
    <name type="ordered locus">BCB4264_A5427</name>
</gene>
<accession>B7HFK2</accession>
<organism>
    <name type="scientific">Bacillus cereus (strain B4264)</name>
    <dbReference type="NCBI Taxonomy" id="405532"/>
    <lineage>
        <taxon>Bacteria</taxon>
        <taxon>Bacillati</taxon>
        <taxon>Bacillota</taxon>
        <taxon>Bacilli</taxon>
        <taxon>Bacillales</taxon>
        <taxon>Bacillaceae</taxon>
        <taxon>Bacillus</taxon>
        <taxon>Bacillus cereus group</taxon>
    </lineage>
</organism>
<comment type="function">
    <text evidence="1">Produces ATP from ADP in the presence of a proton gradient across the membrane. The gamma chain is believed to be important in regulating ATPase activity and the flow of protons through the CF(0) complex.</text>
</comment>
<comment type="subunit">
    <text evidence="1">F-type ATPases have 2 components, CF(1) - the catalytic core - and CF(0) - the membrane proton channel. CF(1) has five subunits: alpha(3), beta(3), gamma(1), delta(1), epsilon(1). CF(0) has three main subunits: a, b and c.</text>
</comment>
<comment type="subcellular location">
    <subcellularLocation>
        <location evidence="1">Cell membrane</location>
        <topology evidence="1">Peripheral membrane protein</topology>
    </subcellularLocation>
</comment>
<comment type="similarity">
    <text evidence="1">Belongs to the ATPase gamma chain family.</text>
</comment>
<sequence>MASLRDIKAKINSTKKTSQITKAMEMVSASKLNRAEQNAKSFVPYMEKIQEVVASIAQGSKGINHPMLNARPVKRTGYIVITSDRGLAGGYNSNVLRTVSNVIRERHNMDSNQYSIIVLGRLGRDYLKRRGFNIIDEVVGLSDHPSFTDIKDLASRAIAMFADGAYDELYIYYNHYVSKISQEVTENKILPLTDVASDKPTTAYEFEPSEEEILKVLLPQYAESLVYGALLDGKASEHAARMTAMKSATDNAMEVIDSLTLSFNRARQAAITQEITEIVGGAAALE</sequence>